<dbReference type="EMBL" id="AB001488">
    <property type="protein sequence ID" value="BAA19381.1"/>
    <property type="molecule type" value="Genomic_DNA"/>
</dbReference>
<dbReference type="EMBL" id="AL009126">
    <property type="protein sequence ID" value="CAB12354.2"/>
    <property type="molecule type" value="Genomic_DNA"/>
</dbReference>
<dbReference type="PIR" id="C69781">
    <property type="entry name" value="C69781"/>
</dbReference>
<dbReference type="RefSeq" id="NP_388428.2">
    <property type="nucleotide sequence ID" value="NC_000964.3"/>
</dbReference>
<dbReference type="RefSeq" id="WP_003244477.1">
    <property type="nucleotide sequence ID" value="NZ_OZ025638.1"/>
</dbReference>
<dbReference type="SMR" id="C0SP78"/>
<dbReference type="FunCoup" id="C0SP78">
    <property type="interactions" value="636"/>
</dbReference>
<dbReference type="STRING" id="224308.BSU05470"/>
<dbReference type="PaxDb" id="224308-BSU05470"/>
<dbReference type="EnsemblBacteria" id="CAB12354">
    <property type="protein sequence ID" value="CAB12354"/>
    <property type="gene ID" value="BSU_05470"/>
</dbReference>
<dbReference type="GeneID" id="939900"/>
<dbReference type="KEGG" id="bsu:BSU05470"/>
<dbReference type="PATRIC" id="fig|224308.179.peg.587"/>
<dbReference type="eggNOG" id="COG0053">
    <property type="taxonomic scope" value="Bacteria"/>
</dbReference>
<dbReference type="InParanoid" id="C0SP78"/>
<dbReference type="OrthoDB" id="9806522at2"/>
<dbReference type="PhylomeDB" id="C0SP78"/>
<dbReference type="BioCyc" id="BSUB:BSU05470-MONOMER"/>
<dbReference type="Proteomes" id="UP000001570">
    <property type="component" value="Chromosome"/>
</dbReference>
<dbReference type="GO" id="GO:0016020">
    <property type="term" value="C:membrane"/>
    <property type="evidence" value="ECO:0000318"/>
    <property type="project" value="GO_Central"/>
</dbReference>
<dbReference type="GO" id="GO:0005886">
    <property type="term" value="C:plasma membrane"/>
    <property type="evidence" value="ECO:0007669"/>
    <property type="project" value="UniProtKB-SubCell"/>
</dbReference>
<dbReference type="GO" id="GO:0008324">
    <property type="term" value="F:monoatomic cation transmembrane transporter activity"/>
    <property type="evidence" value="ECO:0000318"/>
    <property type="project" value="GO_Central"/>
</dbReference>
<dbReference type="FunFam" id="1.20.1510.10:FF:000006">
    <property type="entry name" value="Divalent cation efflux transporter"/>
    <property type="match status" value="1"/>
</dbReference>
<dbReference type="Gene3D" id="1.20.1510.10">
    <property type="entry name" value="Cation efflux protein transmembrane domain"/>
    <property type="match status" value="1"/>
</dbReference>
<dbReference type="Gene3D" id="3.30.70.1350">
    <property type="entry name" value="Cation efflux protein, cytoplasmic domain"/>
    <property type="match status" value="1"/>
</dbReference>
<dbReference type="InterPro" id="IPR002524">
    <property type="entry name" value="Cation_efflux"/>
</dbReference>
<dbReference type="InterPro" id="IPR027470">
    <property type="entry name" value="Cation_efflux_CTD"/>
</dbReference>
<dbReference type="InterPro" id="IPR036837">
    <property type="entry name" value="Cation_efflux_CTD_sf"/>
</dbReference>
<dbReference type="InterPro" id="IPR027469">
    <property type="entry name" value="Cation_efflux_TMD_sf"/>
</dbReference>
<dbReference type="InterPro" id="IPR050291">
    <property type="entry name" value="CDF_Transporter"/>
</dbReference>
<dbReference type="NCBIfam" id="TIGR01297">
    <property type="entry name" value="CDF"/>
    <property type="match status" value="1"/>
</dbReference>
<dbReference type="PANTHER" id="PTHR43840">
    <property type="entry name" value="MITOCHONDRIAL METAL TRANSPORTER 1-RELATED"/>
    <property type="match status" value="1"/>
</dbReference>
<dbReference type="PANTHER" id="PTHR43840:SF15">
    <property type="entry name" value="MITOCHONDRIAL METAL TRANSPORTER 1-RELATED"/>
    <property type="match status" value="1"/>
</dbReference>
<dbReference type="Pfam" id="PF01545">
    <property type="entry name" value="Cation_efflux"/>
    <property type="match status" value="1"/>
</dbReference>
<dbReference type="Pfam" id="PF16916">
    <property type="entry name" value="ZT_dimer"/>
    <property type="match status" value="1"/>
</dbReference>
<dbReference type="SUPFAM" id="SSF160240">
    <property type="entry name" value="Cation efflux protein cytoplasmic domain-like"/>
    <property type="match status" value="1"/>
</dbReference>
<dbReference type="SUPFAM" id="SSF161111">
    <property type="entry name" value="Cation efflux protein transmembrane domain-like"/>
    <property type="match status" value="1"/>
</dbReference>
<evidence type="ECO:0000255" key="1"/>
<evidence type="ECO:0000269" key="2">
    <source>
    </source>
</evidence>
<evidence type="ECO:0000303" key="3">
    <source>
    </source>
</evidence>
<evidence type="ECO:0000305" key="4"/>
<feature type="chain" id="PRO_0000378462" description="Manganese efflux system protein MneP">
    <location>
        <begin position="1"/>
        <end position="297"/>
    </location>
</feature>
<feature type="transmembrane region" description="Helical" evidence="1">
    <location>
        <begin position="12"/>
        <end position="32"/>
    </location>
</feature>
<feature type="transmembrane region" description="Helical" evidence="1">
    <location>
        <begin position="43"/>
        <end position="63"/>
    </location>
</feature>
<feature type="transmembrane region" description="Helical" evidence="1">
    <location>
        <begin position="85"/>
        <end position="105"/>
    </location>
</feature>
<feature type="transmembrane region" description="Helical" evidence="1">
    <location>
        <begin position="111"/>
        <end position="131"/>
    </location>
</feature>
<feature type="transmembrane region" description="Helical" evidence="1">
    <location>
        <begin position="155"/>
        <end position="175"/>
    </location>
</feature>
<feature type="transmembrane region" description="Helical" evidence="1">
    <location>
        <begin position="177"/>
        <end position="197"/>
    </location>
</feature>
<feature type="sequence conflict" description="In Ref. 1; BAA19381." evidence="4" ref="1">
    <original>D</original>
    <variation>G</variation>
    <location>
        <position position="209"/>
    </location>
</feature>
<reference key="1">
    <citation type="submission" date="1997-03" db="EMBL/GenBank/DDBJ databases">
        <title>A 148 kbp sequence of the region between 35 and 47 degree of the Bacillus subtilis genome.</title>
        <authorList>
            <person name="Kasahara Y."/>
            <person name="Nakai S."/>
            <person name="Lee S."/>
            <person name="Sadaie Y."/>
            <person name="Ogasawara N."/>
        </authorList>
    </citation>
    <scope>NUCLEOTIDE SEQUENCE [GENOMIC DNA]</scope>
    <source>
        <strain>168</strain>
    </source>
</reference>
<reference key="2">
    <citation type="journal article" date="1997" name="Nature">
        <title>The complete genome sequence of the Gram-positive bacterium Bacillus subtilis.</title>
        <authorList>
            <person name="Kunst F."/>
            <person name="Ogasawara N."/>
            <person name="Moszer I."/>
            <person name="Albertini A.M."/>
            <person name="Alloni G."/>
            <person name="Azevedo V."/>
            <person name="Bertero M.G."/>
            <person name="Bessieres P."/>
            <person name="Bolotin A."/>
            <person name="Borchert S."/>
            <person name="Borriss R."/>
            <person name="Boursier L."/>
            <person name="Brans A."/>
            <person name="Braun M."/>
            <person name="Brignell S.C."/>
            <person name="Bron S."/>
            <person name="Brouillet S."/>
            <person name="Bruschi C.V."/>
            <person name="Caldwell B."/>
            <person name="Capuano V."/>
            <person name="Carter N.M."/>
            <person name="Choi S.-K."/>
            <person name="Codani J.-J."/>
            <person name="Connerton I.F."/>
            <person name="Cummings N.J."/>
            <person name="Daniel R.A."/>
            <person name="Denizot F."/>
            <person name="Devine K.M."/>
            <person name="Duesterhoeft A."/>
            <person name="Ehrlich S.D."/>
            <person name="Emmerson P.T."/>
            <person name="Entian K.-D."/>
            <person name="Errington J."/>
            <person name="Fabret C."/>
            <person name="Ferrari E."/>
            <person name="Foulger D."/>
            <person name="Fritz C."/>
            <person name="Fujita M."/>
            <person name="Fujita Y."/>
            <person name="Fuma S."/>
            <person name="Galizzi A."/>
            <person name="Galleron N."/>
            <person name="Ghim S.-Y."/>
            <person name="Glaser P."/>
            <person name="Goffeau A."/>
            <person name="Golightly E.J."/>
            <person name="Grandi G."/>
            <person name="Guiseppi G."/>
            <person name="Guy B.J."/>
            <person name="Haga K."/>
            <person name="Haiech J."/>
            <person name="Harwood C.R."/>
            <person name="Henaut A."/>
            <person name="Hilbert H."/>
            <person name="Holsappel S."/>
            <person name="Hosono S."/>
            <person name="Hullo M.-F."/>
            <person name="Itaya M."/>
            <person name="Jones L.-M."/>
            <person name="Joris B."/>
            <person name="Karamata D."/>
            <person name="Kasahara Y."/>
            <person name="Klaerr-Blanchard M."/>
            <person name="Klein C."/>
            <person name="Kobayashi Y."/>
            <person name="Koetter P."/>
            <person name="Koningstein G."/>
            <person name="Krogh S."/>
            <person name="Kumano M."/>
            <person name="Kurita K."/>
            <person name="Lapidus A."/>
            <person name="Lardinois S."/>
            <person name="Lauber J."/>
            <person name="Lazarevic V."/>
            <person name="Lee S.-M."/>
            <person name="Levine A."/>
            <person name="Liu H."/>
            <person name="Masuda S."/>
            <person name="Mauel C."/>
            <person name="Medigue C."/>
            <person name="Medina N."/>
            <person name="Mellado R.P."/>
            <person name="Mizuno M."/>
            <person name="Moestl D."/>
            <person name="Nakai S."/>
            <person name="Noback M."/>
            <person name="Noone D."/>
            <person name="O'Reilly M."/>
            <person name="Ogawa K."/>
            <person name="Ogiwara A."/>
            <person name="Oudega B."/>
            <person name="Park S.-H."/>
            <person name="Parro V."/>
            <person name="Pohl T.M."/>
            <person name="Portetelle D."/>
            <person name="Porwollik S."/>
            <person name="Prescott A.M."/>
            <person name="Presecan E."/>
            <person name="Pujic P."/>
            <person name="Purnelle B."/>
            <person name="Rapoport G."/>
            <person name="Rey M."/>
            <person name="Reynolds S."/>
            <person name="Rieger M."/>
            <person name="Rivolta C."/>
            <person name="Rocha E."/>
            <person name="Roche B."/>
            <person name="Rose M."/>
            <person name="Sadaie Y."/>
            <person name="Sato T."/>
            <person name="Scanlan E."/>
            <person name="Schleich S."/>
            <person name="Schroeter R."/>
            <person name="Scoffone F."/>
            <person name="Sekiguchi J."/>
            <person name="Sekowska A."/>
            <person name="Seror S.J."/>
            <person name="Serror P."/>
            <person name="Shin B.-S."/>
            <person name="Soldo B."/>
            <person name="Sorokin A."/>
            <person name="Tacconi E."/>
            <person name="Takagi T."/>
            <person name="Takahashi H."/>
            <person name="Takemaru K."/>
            <person name="Takeuchi M."/>
            <person name="Tamakoshi A."/>
            <person name="Tanaka T."/>
            <person name="Terpstra P."/>
            <person name="Tognoni A."/>
            <person name="Tosato V."/>
            <person name="Uchiyama S."/>
            <person name="Vandenbol M."/>
            <person name="Vannier F."/>
            <person name="Vassarotti A."/>
            <person name="Viari A."/>
            <person name="Wambutt R."/>
            <person name="Wedler E."/>
            <person name="Wedler H."/>
            <person name="Weitzenegger T."/>
            <person name="Winters P."/>
            <person name="Wipat A."/>
            <person name="Yamamoto H."/>
            <person name="Yamane K."/>
            <person name="Yasumoto K."/>
            <person name="Yata K."/>
            <person name="Yoshida K."/>
            <person name="Yoshikawa H.-F."/>
            <person name="Zumstein E."/>
            <person name="Yoshikawa H."/>
            <person name="Danchin A."/>
        </authorList>
    </citation>
    <scope>NUCLEOTIDE SEQUENCE [LARGE SCALE GENOMIC DNA]</scope>
    <source>
        <strain>168</strain>
    </source>
</reference>
<reference key="3">
    <citation type="journal article" date="2009" name="Microbiology">
        <title>From a consortium sequence to a unified sequence: the Bacillus subtilis 168 reference genome a decade later.</title>
        <authorList>
            <person name="Barbe V."/>
            <person name="Cruveiller S."/>
            <person name="Kunst F."/>
            <person name="Lenoble P."/>
            <person name="Meurice G."/>
            <person name="Sekowska A."/>
            <person name="Vallenet D."/>
            <person name="Wang T."/>
            <person name="Moszer I."/>
            <person name="Medigue C."/>
            <person name="Danchin A."/>
        </authorList>
    </citation>
    <scope>SEQUENCE REVISION TO 209</scope>
</reference>
<reference key="4">
    <citation type="journal article" date="2017" name="Mol. Microbiol.">
        <title>Bacillus subtilis MntR coordinates the transcriptional regulation of manganese uptake and efflux systems.</title>
        <authorList>
            <person name="Huang X."/>
            <person name="Shin J.H."/>
            <person name="Pinochet-Barros A."/>
            <person name="Su T.T."/>
            <person name="Helmann J.D."/>
        </authorList>
    </citation>
    <scope>FUNCTION</scope>
    <scope>INDUCTION</scope>
    <scope>DISRUPTION PHENOTYPE</scope>
</reference>
<name>MNEP_BACSU</name>
<sequence length="297" mass="32854">MASEREQISRKVALIALIANLILMAGKVFFGLVGDSEAVFADGIHSAADVVASIAVLAVIGISNKPPDQDHPFGHGKAEVISEAIVGIILVIVSVYILIEAILSFVKGPSVPQYSALFAALISYVAKEILYRYSIKQGKKWNSKAIIAIAYDHKGDIVASLAAFIGVLLAIIGNSRGWSYLLYADAIASAIVAYLIFKISMELIRPSVDVLMEKSVDPELIEEYKAVIFQCDQVKRIDRIRAREHGHYKLLDVRLSLDHDLTIKQGHDIAREIRNEIKRQFSDVEEVLIHVNPYFEE</sequence>
<comment type="function">
    <text evidence="2">Primary efflux pump for manganese. May prevent manganese intoxication.</text>
</comment>
<comment type="subcellular location">
    <subcellularLocation>
        <location evidence="4">Cell membrane</location>
        <topology evidence="1">Multi-pass membrane protein</topology>
    </subcellularLocation>
</comment>
<comment type="induction">
    <text evidence="2">Transcriptionally activated by MntR in response to manganese excess. Expressed at a basal level in the absence of MntR.</text>
</comment>
<comment type="disruption phenotype">
    <text evidence="2">Deletion mutant is manganese sensitive and accumulates high levels of intracellular manganese. Effects are exacerbated in a mneP-mneS double mutant.</text>
</comment>
<comment type="similarity">
    <text evidence="4">Belongs to the cation diffusion facilitator (CDF) transporter (TC 2.A.4) family.</text>
</comment>
<protein>
    <recommendedName>
        <fullName evidence="3">Manganese efflux system protein MneP</fullName>
    </recommendedName>
</protein>
<organism>
    <name type="scientific">Bacillus subtilis (strain 168)</name>
    <dbReference type="NCBI Taxonomy" id="224308"/>
    <lineage>
        <taxon>Bacteria</taxon>
        <taxon>Bacillati</taxon>
        <taxon>Bacillota</taxon>
        <taxon>Bacilli</taxon>
        <taxon>Bacillales</taxon>
        <taxon>Bacillaceae</taxon>
        <taxon>Bacillus</taxon>
    </lineage>
</organism>
<proteinExistence type="evidence at transcript level"/>
<accession>C0SP78</accession>
<accession>P96691</accession>
<accession>Q797G0</accession>
<keyword id="KW-1003">Cell membrane</keyword>
<keyword id="KW-0406">Ion transport</keyword>
<keyword id="KW-0472">Membrane</keyword>
<keyword id="KW-1185">Reference proteome</keyword>
<keyword id="KW-0812">Transmembrane</keyword>
<keyword id="KW-1133">Transmembrane helix</keyword>
<keyword id="KW-0813">Transport</keyword>
<gene>
    <name evidence="3" type="primary">mneP</name>
    <name type="synonym">ydfM</name>
    <name type="ordered locus">BSU05470</name>
</gene>